<keyword id="KW-0007">Acetylation</keyword>
<keyword id="KW-0903">Direct protein sequencing</keyword>
<keyword id="KW-0349">Heme</keyword>
<keyword id="KW-0408">Iron</keyword>
<keyword id="KW-0479">Metal-binding</keyword>
<keyword id="KW-0561">Oxygen transport</keyword>
<keyword id="KW-0597">Phosphoprotein</keyword>
<keyword id="KW-0813">Transport</keyword>
<comment type="function">
    <text>Involved in oxygen transport from the lung to the various peripheral tissues.</text>
</comment>
<comment type="function">
    <molecule>Hemopressin</molecule>
    <text evidence="2">Hemopressin acts as an antagonist peptide of the cannabinoid receptor CNR1. Hemopressin-binding efficiently blocks cannabinoid receptor CNR1 and subsequent signaling.</text>
</comment>
<comment type="subunit">
    <text>Heterotetramer of two alpha chains and two beta chains.</text>
</comment>
<comment type="tissue specificity">
    <text>Red blood cells.</text>
</comment>
<comment type="similarity">
    <text evidence="4">Belongs to the globin family.</text>
</comment>
<reference key="1">
    <citation type="journal article" date="1978" name="Biochim. Biophys. Acta">
        <title>The amino acid sequence of the alpha chain of badger (Meles meles) haemoglobin.</title>
        <authorList>
            <person name="Hombrados I."/>
            <person name="Neuzil E."/>
            <person name="Debuire B."/>
            <person name="Han K.-K."/>
        </authorList>
    </citation>
    <scope>PROTEIN SEQUENCE</scope>
</reference>
<name>HBA_MELME</name>
<feature type="chain" id="PRO_0000052690" description="Hemoglobin subunit alpha">
    <location>
        <begin position="1"/>
        <end position="141"/>
    </location>
</feature>
<feature type="peptide" id="PRO_0000455903" description="Hemopressin" evidence="2">
    <location>
        <begin position="95"/>
        <end position="103"/>
    </location>
</feature>
<feature type="domain" description="Globin" evidence="4">
    <location>
        <begin position="1"/>
        <end position="141"/>
    </location>
</feature>
<feature type="binding site" evidence="4">
    <location>
        <position position="58"/>
    </location>
    <ligand>
        <name>O2</name>
        <dbReference type="ChEBI" id="CHEBI:15379"/>
    </ligand>
</feature>
<feature type="binding site" description="proximal binding residue" evidence="4">
    <location>
        <position position="87"/>
    </location>
    <ligand>
        <name>heme b</name>
        <dbReference type="ChEBI" id="CHEBI:60344"/>
    </ligand>
    <ligandPart>
        <name>Fe</name>
        <dbReference type="ChEBI" id="CHEBI:18248"/>
    </ligandPart>
</feature>
<feature type="modified residue" description="Phosphoserine" evidence="3">
    <location>
        <position position="3"/>
    </location>
</feature>
<feature type="modified residue" description="N6-succinyllysine" evidence="1">
    <location>
        <position position="7"/>
    </location>
</feature>
<feature type="modified residue" description="N6-succinyllysine" evidence="1">
    <location>
        <position position="11"/>
    </location>
</feature>
<feature type="modified residue" description="N6-acetyllysine; alternate" evidence="3">
    <location>
        <position position="16"/>
    </location>
</feature>
<feature type="modified residue" description="N6-succinyllysine; alternate" evidence="1">
    <location>
        <position position="16"/>
    </location>
</feature>
<feature type="modified residue" description="Phosphotyrosine" evidence="3">
    <location>
        <position position="24"/>
    </location>
</feature>
<feature type="modified residue" description="Phosphoserine" evidence="3">
    <location>
        <position position="35"/>
    </location>
</feature>
<feature type="modified residue" description="N6-succinyllysine" evidence="1">
    <location>
        <position position="40"/>
    </location>
</feature>
<feature type="modified residue" description="Phosphoserine" evidence="3">
    <location>
        <position position="49"/>
    </location>
</feature>
<feature type="modified residue" description="Phosphoserine" evidence="1">
    <location>
        <position position="102"/>
    </location>
</feature>
<feature type="modified residue" description="Phosphothreonine" evidence="1">
    <location>
        <position position="108"/>
    </location>
</feature>
<feature type="modified residue" description="Phosphoserine" evidence="1">
    <location>
        <position position="124"/>
    </location>
</feature>
<feature type="modified residue" description="Phosphoserine" evidence="1">
    <location>
        <position position="131"/>
    </location>
</feature>
<feature type="modified residue" description="Phosphothreonine" evidence="1">
    <location>
        <position position="134"/>
    </location>
</feature>
<feature type="modified residue" description="Phosphothreonine" evidence="1">
    <location>
        <position position="137"/>
    </location>
</feature>
<feature type="modified residue" description="Phosphoserine" evidence="1">
    <location>
        <position position="138"/>
    </location>
</feature>
<accession>P01953</accession>
<dbReference type="PIR" id="A02276">
    <property type="entry name" value="HABD"/>
</dbReference>
<dbReference type="SMR" id="P01953"/>
<dbReference type="GO" id="GO:0072562">
    <property type="term" value="C:blood microparticle"/>
    <property type="evidence" value="ECO:0007669"/>
    <property type="project" value="TreeGrafter"/>
</dbReference>
<dbReference type="GO" id="GO:0031838">
    <property type="term" value="C:haptoglobin-hemoglobin complex"/>
    <property type="evidence" value="ECO:0007669"/>
    <property type="project" value="TreeGrafter"/>
</dbReference>
<dbReference type="GO" id="GO:0005833">
    <property type="term" value="C:hemoglobin complex"/>
    <property type="evidence" value="ECO:0007669"/>
    <property type="project" value="InterPro"/>
</dbReference>
<dbReference type="GO" id="GO:0031720">
    <property type="term" value="F:haptoglobin binding"/>
    <property type="evidence" value="ECO:0007669"/>
    <property type="project" value="TreeGrafter"/>
</dbReference>
<dbReference type="GO" id="GO:0020037">
    <property type="term" value="F:heme binding"/>
    <property type="evidence" value="ECO:0007669"/>
    <property type="project" value="InterPro"/>
</dbReference>
<dbReference type="GO" id="GO:0005506">
    <property type="term" value="F:iron ion binding"/>
    <property type="evidence" value="ECO:0007669"/>
    <property type="project" value="InterPro"/>
</dbReference>
<dbReference type="GO" id="GO:0043177">
    <property type="term" value="F:organic acid binding"/>
    <property type="evidence" value="ECO:0007669"/>
    <property type="project" value="TreeGrafter"/>
</dbReference>
<dbReference type="GO" id="GO:0019825">
    <property type="term" value="F:oxygen binding"/>
    <property type="evidence" value="ECO:0007669"/>
    <property type="project" value="InterPro"/>
</dbReference>
<dbReference type="GO" id="GO:0005344">
    <property type="term" value="F:oxygen carrier activity"/>
    <property type="evidence" value="ECO:0007669"/>
    <property type="project" value="UniProtKB-KW"/>
</dbReference>
<dbReference type="GO" id="GO:0004601">
    <property type="term" value="F:peroxidase activity"/>
    <property type="evidence" value="ECO:0007669"/>
    <property type="project" value="TreeGrafter"/>
</dbReference>
<dbReference type="GO" id="GO:0042744">
    <property type="term" value="P:hydrogen peroxide catabolic process"/>
    <property type="evidence" value="ECO:0007669"/>
    <property type="project" value="TreeGrafter"/>
</dbReference>
<dbReference type="CDD" id="cd08927">
    <property type="entry name" value="Hb-alpha-like"/>
    <property type="match status" value="1"/>
</dbReference>
<dbReference type="FunFam" id="1.10.490.10:FF:000002">
    <property type="entry name" value="Hemoglobin subunit alpha"/>
    <property type="match status" value="1"/>
</dbReference>
<dbReference type="Gene3D" id="1.10.490.10">
    <property type="entry name" value="Globins"/>
    <property type="match status" value="1"/>
</dbReference>
<dbReference type="InterPro" id="IPR000971">
    <property type="entry name" value="Globin"/>
</dbReference>
<dbReference type="InterPro" id="IPR009050">
    <property type="entry name" value="Globin-like_sf"/>
</dbReference>
<dbReference type="InterPro" id="IPR012292">
    <property type="entry name" value="Globin/Proto"/>
</dbReference>
<dbReference type="InterPro" id="IPR002338">
    <property type="entry name" value="Hemoglobin_a-typ"/>
</dbReference>
<dbReference type="InterPro" id="IPR050056">
    <property type="entry name" value="Hemoglobin_oxygen_transport"/>
</dbReference>
<dbReference type="InterPro" id="IPR002339">
    <property type="entry name" value="Hemoglobin_pi"/>
</dbReference>
<dbReference type="PANTHER" id="PTHR11442">
    <property type="entry name" value="HEMOGLOBIN FAMILY MEMBER"/>
    <property type="match status" value="1"/>
</dbReference>
<dbReference type="PANTHER" id="PTHR11442:SF48">
    <property type="entry name" value="HEMOGLOBIN SUBUNIT ALPHA"/>
    <property type="match status" value="1"/>
</dbReference>
<dbReference type="Pfam" id="PF00042">
    <property type="entry name" value="Globin"/>
    <property type="match status" value="1"/>
</dbReference>
<dbReference type="PRINTS" id="PR00612">
    <property type="entry name" value="ALPHAHAEM"/>
</dbReference>
<dbReference type="PRINTS" id="PR00815">
    <property type="entry name" value="PIHAEM"/>
</dbReference>
<dbReference type="SUPFAM" id="SSF46458">
    <property type="entry name" value="Globin-like"/>
    <property type="match status" value="1"/>
</dbReference>
<dbReference type="PROSITE" id="PS01033">
    <property type="entry name" value="GLOBIN"/>
    <property type="match status" value="1"/>
</dbReference>
<gene>
    <name type="primary">HBA</name>
</gene>
<sequence>VLSPADKANIKATWDKIGGHAGEYGGEALERTFASFPTTKTYFPHFDLSHGSAQVKGHGKKVADALTNAVAHLDDLPGALSALSDLHAYKLRVDPVNFKLLSHCLLVTLACHHPAEFTPAVHASLDKFLSSVSTVLTSKYR</sequence>
<organism>
    <name type="scientific">Meles meles</name>
    <name type="common">Eurasian badger</name>
    <dbReference type="NCBI Taxonomy" id="9662"/>
    <lineage>
        <taxon>Eukaryota</taxon>
        <taxon>Metazoa</taxon>
        <taxon>Chordata</taxon>
        <taxon>Craniata</taxon>
        <taxon>Vertebrata</taxon>
        <taxon>Euteleostomi</taxon>
        <taxon>Mammalia</taxon>
        <taxon>Eutheria</taxon>
        <taxon>Laurasiatheria</taxon>
        <taxon>Carnivora</taxon>
        <taxon>Caniformia</taxon>
        <taxon>Musteloidea</taxon>
        <taxon>Mustelidae</taxon>
        <taxon>Melinae</taxon>
        <taxon>Meles</taxon>
    </lineage>
</organism>
<evidence type="ECO:0000250" key="1">
    <source>
        <dbReference type="UniProtKB" id="P01942"/>
    </source>
</evidence>
<evidence type="ECO:0000250" key="2">
    <source>
        <dbReference type="UniProtKB" id="P01946"/>
    </source>
</evidence>
<evidence type="ECO:0000250" key="3">
    <source>
        <dbReference type="UniProtKB" id="P69905"/>
    </source>
</evidence>
<evidence type="ECO:0000255" key="4">
    <source>
        <dbReference type="PROSITE-ProRule" id="PRU00238"/>
    </source>
</evidence>
<protein>
    <recommendedName>
        <fullName>Hemoglobin subunit alpha</fullName>
    </recommendedName>
    <alternativeName>
        <fullName>Alpha-globin</fullName>
    </alternativeName>
    <alternativeName>
        <fullName>Hemoglobin alpha chain</fullName>
    </alternativeName>
    <component>
        <recommendedName>
            <fullName evidence="2">Hemopressin</fullName>
        </recommendedName>
    </component>
</protein>
<proteinExistence type="evidence at protein level"/>